<reference key="1">
    <citation type="journal article" date="2006" name="Genome Biol.">
        <title>The genome of Rhizobium leguminosarum has recognizable core and accessory components.</title>
        <authorList>
            <person name="Young J.P.W."/>
            <person name="Crossman L.C."/>
            <person name="Johnston A.W.B."/>
            <person name="Thomson N.R."/>
            <person name="Ghazoui Z.F."/>
            <person name="Hull K.H."/>
            <person name="Wexler M."/>
            <person name="Curson A.R.J."/>
            <person name="Todd J.D."/>
            <person name="Poole P.S."/>
            <person name="Mauchline T.H."/>
            <person name="East A.K."/>
            <person name="Quail M.A."/>
            <person name="Churcher C."/>
            <person name="Arrowsmith C."/>
            <person name="Cherevach I."/>
            <person name="Chillingworth T."/>
            <person name="Clarke K."/>
            <person name="Cronin A."/>
            <person name="Davis P."/>
            <person name="Fraser A."/>
            <person name="Hance Z."/>
            <person name="Hauser H."/>
            <person name="Jagels K."/>
            <person name="Moule S."/>
            <person name="Mungall K."/>
            <person name="Norbertczak H."/>
            <person name="Rabbinowitsch E."/>
            <person name="Sanders M."/>
            <person name="Simmonds M."/>
            <person name="Whitehead S."/>
            <person name="Parkhill J."/>
        </authorList>
    </citation>
    <scope>NUCLEOTIDE SEQUENCE [LARGE SCALE GENOMIC DNA]</scope>
    <source>
        <strain>DSM 114642 / LMG 32736 / 3841</strain>
    </source>
</reference>
<keyword id="KW-1005">Bacterial flagellum biogenesis</keyword>
<keyword id="KW-0678">Repressor</keyword>
<keyword id="KW-0694">RNA-binding</keyword>
<comment type="function">
    <text evidence="1">Has a post-transcriptional repressor function in flagellum biogenesis. Associates with the 5'-UTR of fljK mRNA and promotes its degradation.</text>
</comment>
<comment type="similarity">
    <text evidence="1">Belongs to the FlbT family.</text>
</comment>
<dbReference type="EMBL" id="AM236080">
    <property type="protein sequence ID" value="CAK06226.1"/>
    <property type="molecule type" value="Genomic_DNA"/>
</dbReference>
<dbReference type="RefSeq" id="WP_011650489.1">
    <property type="nucleotide sequence ID" value="NC_008380.1"/>
</dbReference>
<dbReference type="EnsemblBacteria" id="CAK06226">
    <property type="protein sequence ID" value="CAK06226"/>
    <property type="gene ID" value="RL0732"/>
</dbReference>
<dbReference type="KEGG" id="rle:RL0732"/>
<dbReference type="eggNOG" id="COG5443">
    <property type="taxonomic scope" value="Bacteria"/>
</dbReference>
<dbReference type="HOGENOM" id="CLU_130913_1_0_5"/>
<dbReference type="Proteomes" id="UP000006575">
    <property type="component" value="Chromosome"/>
</dbReference>
<dbReference type="GO" id="GO:0048027">
    <property type="term" value="F:mRNA 5'-UTR binding"/>
    <property type="evidence" value="ECO:0007669"/>
    <property type="project" value="UniProtKB-UniRule"/>
</dbReference>
<dbReference type="GO" id="GO:0044781">
    <property type="term" value="P:bacterial-type flagellum organization"/>
    <property type="evidence" value="ECO:0007669"/>
    <property type="project" value="UniProtKB-KW"/>
</dbReference>
<dbReference type="GO" id="GO:0006402">
    <property type="term" value="P:mRNA catabolic process"/>
    <property type="evidence" value="ECO:0007669"/>
    <property type="project" value="InterPro"/>
</dbReference>
<dbReference type="GO" id="GO:1902209">
    <property type="term" value="P:negative regulation of bacterial-type flagellum assembly"/>
    <property type="evidence" value="ECO:0007669"/>
    <property type="project" value="UniProtKB-UniRule"/>
</dbReference>
<dbReference type="HAMAP" id="MF_00783">
    <property type="entry name" value="FlbT"/>
    <property type="match status" value="1"/>
</dbReference>
<dbReference type="InterPro" id="IPR009967">
    <property type="entry name" value="Flagellum_FlbT"/>
</dbReference>
<dbReference type="NCBIfam" id="NF001995">
    <property type="entry name" value="PRK00794.1-1"/>
    <property type="match status" value="1"/>
</dbReference>
<dbReference type="Pfam" id="PF07378">
    <property type="entry name" value="FlbT"/>
    <property type="match status" value="1"/>
</dbReference>
<dbReference type="PIRSF" id="PIRSF009533">
    <property type="entry name" value="FlbT"/>
    <property type="match status" value="1"/>
</dbReference>
<organism>
    <name type="scientific">Rhizobium johnstonii (strain DSM 114642 / LMG 32736 / 3841)</name>
    <name type="common">Rhizobium leguminosarum bv. viciae</name>
    <dbReference type="NCBI Taxonomy" id="216596"/>
    <lineage>
        <taxon>Bacteria</taxon>
        <taxon>Pseudomonadati</taxon>
        <taxon>Pseudomonadota</taxon>
        <taxon>Alphaproteobacteria</taxon>
        <taxon>Hyphomicrobiales</taxon>
        <taxon>Rhizobiaceae</taxon>
        <taxon>Rhizobium/Agrobacterium group</taxon>
        <taxon>Rhizobium</taxon>
        <taxon>Rhizobium johnstonii</taxon>
    </lineage>
</organism>
<evidence type="ECO:0000255" key="1">
    <source>
        <dbReference type="HAMAP-Rule" id="MF_00783"/>
    </source>
</evidence>
<gene>
    <name evidence="1" type="primary">flbT</name>
    <name type="ordered locus">RL0732</name>
</gene>
<sequence>MKSTLRISLKAGERIFINGAVLRVDRKVALEFLNDVTFLLENHVLQPEGATTPLRQLYFIAQMILINPEGKDHSTALFRKSITMLLSCFRNEEILAELKRIDALVSTGRAFDALKAIRGLYAIEDNILNNHEMPPTMVEQIRREIAPWR</sequence>
<feature type="chain" id="PRO_1000046834" description="Probable flagellum biosynthesis repressor protein FlbT">
    <location>
        <begin position="1"/>
        <end position="149"/>
    </location>
</feature>
<proteinExistence type="inferred from homology"/>
<name>FLBT_RHIJ3</name>
<accession>Q1MLC7</accession>
<protein>
    <recommendedName>
        <fullName evidence="1">Probable flagellum biosynthesis repressor protein FlbT</fullName>
    </recommendedName>
</protein>